<organism>
    <name type="scientific">Thermococcus gammatolerans (strain DSM 15229 / JCM 11827 / EJ3)</name>
    <dbReference type="NCBI Taxonomy" id="593117"/>
    <lineage>
        <taxon>Archaea</taxon>
        <taxon>Methanobacteriati</taxon>
        <taxon>Methanobacteriota</taxon>
        <taxon>Thermococci</taxon>
        <taxon>Thermococcales</taxon>
        <taxon>Thermococcaceae</taxon>
        <taxon>Thermococcus</taxon>
    </lineage>
</organism>
<accession>C5A593</accession>
<dbReference type="EMBL" id="CP001398">
    <property type="protein sequence ID" value="ACS33405.1"/>
    <property type="molecule type" value="Genomic_DNA"/>
</dbReference>
<dbReference type="RefSeq" id="WP_015858520.1">
    <property type="nucleotide sequence ID" value="NC_012804.1"/>
</dbReference>
<dbReference type="SMR" id="C5A593"/>
<dbReference type="STRING" id="593117.TGAM_0903"/>
<dbReference type="PaxDb" id="593117-TGAM_0903"/>
<dbReference type="GeneID" id="7986860"/>
<dbReference type="KEGG" id="tga:TGAM_0903"/>
<dbReference type="PATRIC" id="fig|593117.10.peg.896"/>
<dbReference type="eggNOG" id="arCOG01303">
    <property type="taxonomic scope" value="Archaea"/>
</dbReference>
<dbReference type="HOGENOM" id="CLU_097408_2_1_2"/>
<dbReference type="OrthoDB" id="9810at2157"/>
<dbReference type="Proteomes" id="UP000001488">
    <property type="component" value="Chromosome"/>
</dbReference>
<dbReference type="GO" id="GO:0005737">
    <property type="term" value="C:cytoplasm"/>
    <property type="evidence" value="ECO:0007669"/>
    <property type="project" value="TreeGrafter"/>
</dbReference>
<dbReference type="GO" id="GO:0005960">
    <property type="term" value="C:glycine cleavage complex"/>
    <property type="evidence" value="ECO:0007669"/>
    <property type="project" value="InterPro"/>
</dbReference>
<dbReference type="GO" id="GO:0019464">
    <property type="term" value="P:glycine decarboxylation via glycine cleavage system"/>
    <property type="evidence" value="ECO:0007669"/>
    <property type="project" value="UniProtKB-UniRule"/>
</dbReference>
<dbReference type="CDD" id="cd06848">
    <property type="entry name" value="GCS_H"/>
    <property type="match status" value="1"/>
</dbReference>
<dbReference type="Gene3D" id="2.40.50.100">
    <property type="match status" value="1"/>
</dbReference>
<dbReference type="HAMAP" id="MF_00272">
    <property type="entry name" value="GcvH"/>
    <property type="match status" value="1"/>
</dbReference>
<dbReference type="InterPro" id="IPR003016">
    <property type="entry name" value="2-oxoA_DH_lipoyl-BS"/>
</dbReference>
<dbReference type="InterPro" id="IPR000089">
    <property type="entry name" value="Biotin_lipoyl"/>
</dbReference>
<dbReference type="InterPro" id="IPR002930">
    <property type="entry name" value="GCV_H"/>
</dbReference>
<dbReference type="InterPro" id="IPR033753">
    <property type="entry name" value="GCV_H/Fam206"/>
</dbReference>
<dbReference type="InterPro" id="IPR017453">
    <property type="entry name" value="GCV_H_sub"/>
</dbReference>
<dbReference type="InterPro" id="IPR011053">
    <property type="entry name" value="Single_hybrid_motif"/>
</dbReference>
<dbReference type="NCBIfam" id="TIGR00527">
    <property type="entry name" value="gcvH"/>
    <property type="match status" value="1"/>
</dbReference>
<dbReference type="NCBIfam" id="NF002270">
    <property type="entry name" value="PRK01202.1"/>
    <property type="match status" value="1"/>
</dbReference>
<dbReference type="PANTHER" id="PTHR11715">
    <property type="entry name" value="GLYCINE CLEAVAGE SYSTEM H PROTEIN"/>
    <property type="match status" value="1"/>
</dbReference>
<dbReference type="PANTHER" id="PTHR11715:SF3">
    <property type="entry name" value="GLYCINE CLEAVAGE SYSTEM H PROTEIN-RELATED"/>
    <property type="match status" value="1"/>
</dbReference>
<dbReference type="Pfam" id="PF01597">
    <property type="entry name" value="GCV_H"/>
    <property type="match status" value="1"/>
</dbReference>
<dbReference type="SUPFAM" id="SSF51230">
    <property type="entry name" value="Single hybrid motif"/>
    <property type="match status" value="1"/>
</dbReference>
<dbReference type="PROSITE" id="PS50968">
    <property type="entry name" value="BIOTINYL_LIPOYL"/>
    <property type="match status" value="1"/>
</dbReference>
<dbReference type="PROSITE" id="PS00189">
    <property type="entry name" value="LIPOYL"/>
    <property type="match status" value="1"/>
</dbReference>
<feature type="chain" id="PRO_1000204753" description="Probable glycine cleavage system H protein">
    <location>
        <begin position="1"/>
        <end position="134"/>
    </location>
</feature>
<feature type="domain" description="Lipoyl-binding" evidence="2">
    <location>
        <begin position="29"/>
        <end position="110"/>
    </location>
</feature>
<feature type="modified residue" description="N6-lipoyllysine" evidence="1">
    <location>
        <position position="70"/>
    </location>
</feature>
<sequence length="134" mass="15061">MIEVGEYKVKEGLYYTKDHEWAKVLDDGTVLVGITDYAQKELGDLAYVELPEVGKEVNKGDVLCEIESVKAVSEVYAPVSGEVIEVNEALEDSPELLNEDPYENWIAKLKPSNLDEELKELMDAEAYAKYLESL</sequence>
<protein>
    <recommendedName>
        <fullName evidence="1">Probable glycine cleavage system H protein</fullName>
    </recommendedName>
</protein>
<evidence type="ECO:0000255" key="1">
    <source>
        <dbReference type="HAMAP-Rule" id="MF_00272"/>
    </source>
</evidence>
<evidence type="ECO:0000255" key="2">
    <source>
        <dbReference type="PROSITE-ProRule" id="PRU01066"/>
    </source>
</evidence>
<reference key="1">
    <citation type="journal article" date="2007" name="Genome Biol.">
        <title>Genome analysis and genome-wide proteomics of Thermococcus gammatolerans, the most radioresistant organism known amongst the Archaea.</title>
        <authorList>
            <person name="Zivanovic Y."/>
            <person name="Armengaud J."/>
            <person name="Lagorce A."/>
            <person name="Leplat C."/>
            <person name="Guerin P."/>
            <person name="Dutertre M."/>
            <person name="Anthouard V."/>
            <person name="Forterre P."/>
            <person name="Wincker P."/>
            <person name="Confalonieri F."/>
        </authorList>
    </citation>
    <scope>NUCLEOTIDE SEQUENCE [LARGE SCALE GENOMIC DNA]</scope>
    <source>
        <strain>DSM 15229 / JCM 11827 / EJ3</strain>
    </source>
</reference>
<proteinExistence type="inferred from homology"/>
<name>GCSH_THEGJ</name>
<comment type="function">
    <text evidence="1">The glycine cleavage system catalyzes the degradation of glycine. The H protein shuttles the methylamine group of glycine from the P protein to the T protein.</text>
</comment>
<comment type="cofactor">
    <cofactor evidence="1">
        <name>(R)-lipoate</name>
        <dbReference type="ChEBI" id="CHEBI:83088"/>
    </cofactor>
    <text evidence="1">Binds 1 lipoyl cofactor covalently.</text>
</comment>
<comment type="subunit">
    <text evidence="1">The glycine cleavage system is composed of four proteins: P, T, L and H.</text>
</comment>
<comment type="similarity">
    <text evidence="1">Belongs to the GcvH family.</text>
</comment>
<keyword id="KW-0450">Lipoyl</keyword>
<keyword id="KW-1185">Reference proteome</keyword>
<gene>
    <name evidence="1" type="primary">gcvH</name>
    <name type="ordered locus">TGAM_0903</name>
</gene>